<evidence type="ECO:0000255" key="1">
    <source>
        <dbReference type="HAMAP-Rule" id="MF_00580"/>
    </source>
</evidence>
<reference key="1">
    <citation type="journal article" date="2010" name="BMC Genomics">
        <title>A genomic perspective on the potential of Actinobacillus succinogenes for industrial succinate production.</title>
        <authorList>
            <person name="McKinlay J.B."/>
            <person name="Laivenieks M."/>
            <person name="Schindler B.D."/>
            <person name="McKinlay A.A."/>
            <person name="Siddaramappa S."/>
            <person name="Challacombe J.F."/>
            <person name="Lowry S.R."/>
            <person name="Clum A."/>
            <person name="Lapidus A.L."/>
            <person name="Burkhart K.B."/>
            <person name="Harkins V."/>
            <person name="Vieille C."/>
        </authorList>
    </citation>
    <scope>NUCLEOTIDE SEQUENCE [LARGE SCALE GENOMIC DNA]</scope>
    <source>
        <strain>ATCC 55618 / DSM 22257 / CCUG 43843 / 130Z</strain>
    </source>
</reference>
<feature type="chain" id="PRO_1000072582" description="Co-chaperonin GroES">
    <location>
        <begin position="1"/>
        <end position="96"/>
    </location>
</feature>
<protein>
    <recommendedName>
        <fullName evidence="1">Co-chaperonin GroES</fullName>
    </recommendedName>
    <alternativeName>
        <fullName evidence="1">10 kDa chaperonin</fullName>
    </alternativeName>
    <alternativeName>
        <fullName evidence="1">Chaperonin-10</fullName>
        <shortName evidence="1">Cpn10</shortName>
    </alternativeName>
</protein>
<sequence>MAIRPLHDRVIIKREEVETLSAGGIVLTGSAATKSTRAKVLAVGKGRVLENGTVQPLDVKVGDTVIFNDGYGVKAEKIDGEEVLIISENDILAIVE</sequence>
<dbReference type="EMBL" id="CP000746">
    <property type="protein sequence ID" value="ABR74036.1"/>
    <property type="molecule type" value="Genomic_DNA"/>
</dbReference>
<dbReference type="RefSeq" id="WP_012072416.1">
    <property type="nucleotide sequence ID" value="NC_009655.1"/>
</dbReference>
<dbReference type="SMR" id="A6VM39"/>
<dbReference type="STRING" id="339671.Asuc_0663"/>
<dbReference type="GeneID" id="93227252"/>
<dbReference type="KEGG" id="asu:Asuc_0663"/>
<dbReference type="eggNOG" id="COG0234">
    <property type="taxonomic scope" value="Bacteria"/>
</dbReference>
<dbReference type="HOGENOM" id="CLU_132825_1_1_6"/>
<dbReference type="OrthoDB" id="9806791at2"/>
<dbReference type="Proteomes" id="UP000001114">
    <property type="component" value="Chromosome"/>
</dbReference>
<dbReference type="GO" id="GO:0005737">
    <property type="term" value="C:cytoplasm"/>
    <property type="evidence" value="ECO:0007669"/>
    <property type="project" value="UniProtKB-SubCell"/>
</dbReference>
<dbReference type="GO" id="GO:0005524">
    <property type="term" value="F:ATP binding"/>
    <property type="evidence" value="ECO:0007669"/>
    <property type="project" value="InterPro"/>
</dbReference>
<dbReference type="GO" id="GO:0046872">
    <property type="term" value="F:metal ion binding"/>
    <property type="evidence" value="ECO:0007669"/>
    <property type="project" value="TreeGrafter"/>
</dbReference>
<dbReference type="GO" id="GO:0044183">
    <property type="term" value="F:protein folding chaperone"/>
    <property type="evidence" value="ECO:0007669"/>
    <property type="project" value="InterPro"/>
</dbReference>
<dbReference type="GO" id="GO:0051087">
    <property type="term" value="F:protein-folding chaperone binding"/>
    <property type="evidence" value="ECO:0007669"/>
    <property type="project" value="TreeGrafter"/>
</dbReference>
<dbReference type="GO" id="GO:0051082">
    <property type="term" value="F:unfolded protein binding"/>
    <property type="evidence" value="ECO:0007669"/>
    <property type="project" value="TreeGrafter"/>
</dbReference>
<dbReference type="GO" id="GO:0051085">
    <property type="term" value="P:chaperone cofactor-dependent protein refolding"/>
    <property type="evidence" value="ECO:0007669"/>
    <property type="project" value="TreeGrafter"/>
</dbReference>
<dbReference type="CDD" id="cd00320">
    <property type="entry name" value="cpn10"/>
    <property type="match status" value="1"/>
</dbReference>
<dbReference type="FunFam" id="2.30.33.40:FF:000001">
    <property type="entry name" value="10 kDa chaperonin"/>
    <property type="match status" value="1"/>
</dbReference>
<dbReference type="Gene3D" id="2.30.33.40">
    <property type="entry name" value="GroES chaperonin"/>
    <property type="match status" value="1"/>
</dbReference>
<dbReference type="HAMAP" id="MF_00580">
    <property type="entry name" value="CH10"/>
    <property type="match status" value="1"/>
</dbReference>
<dbReference type="InterPro" id="IPR020818">
    <property type="entry name" value="Chaperonin_GroES"/>
</dbReference>
<dbReference type="InterPro" id="IPR037124">
    <property type="entry name" value="Chaperonin_GroES_sf"/>
</dbReference>
<dbReference type="InterPro" id="IPR018369">
    <property type="entry name" value="Chaprnonin_Cpn10_CS"/>
</dbReference>
<dbReference type="InterPro" id="IPR011032">
    <property type="entry name" value="GroES-like_sf"/>
</dbReference>
<dbReference type="NCBIfam" id="NF001526">
    <property type="entry name" value="PRK00364.1-1"/>
    <property type="match status" value="1"/>
</dbReference>
<dbReference type="PANTHER" id="PTHR10772">
    <property type="entry name" value="10 KDA HEAT SHOCK PROTEIN"/>
    <property type="match status" value="1"/>
</dbReference>
<dbReference type="PANTHER" id="PTHR10772:SF58">
    <property type="entry name" value="CO-CHAPERONIN GROES"/>
    <property type="match status" value="1"/>
</dbReference>
<dbReference type="Pfam" id="PF00166">
    <property type="entry name" value="Cpn10"/>
    <property type="match status" value="1"/>
</dbReference>
<dbReference type="PRINTS" id="PR00297">
    <property type="entry name" value="CHAPERONIN10"/>
</dbReference>
<dbReference type="SMART" id="SM00883">
    <property type="entry name" value="Cpn10"/>
    <property type="match status" value="1"/>
</dbReference>
<dbReference type="SUPFAM" id="SSF50129">
    <property type="entry name" value="GroES-like"/>
    <property type="match status" value="1"/>
</dbReference>
<dbReference type="PROSITE" id="PS00681">
    <property type="entry name" value="CHAPERONINS_CPN10"/>
    <property type="match status" value="1"/>
</dbReference>
<keyword id="KW-0143">Chaperone</keyword>
<keyword id="KW-0963">Cytoplasm</keyword>
<keyword id="KW-1185">Reference proteome</keyword>
<gene>
    <name evidence="1" type="primary">groES</name>
    <name evidence="1" type="synonym">groS</name>
    <name type="ordered locus">Asuc_0663</name>
</gene>
<comment type="function">
    <text evidence="1">Together with the chaperonin GroEL, plays an essential role in assisting protein folding. The GroEL-GroES system forms a nano-cage that allows encapsulation of the non-native substrate proteins and provides a physical environment optimized to promote and accelerate protein folding. GroES binds to the apical surface of the GroEL ring, thereby capping the opening of the GroEL channel.</text>
</comment>
<comment type="subunit">
    <text evidence="1">Heptamer of 7 subunits arranged in a ring. Interacts with the chaperonin GroEL.</text>
</comment>
<comment type="subcellular location">
    <subcellularLocation>
        <location evidence="1">Cytoplasm</location>
    </subcellularLocation>
</comment>
<comment type="similarity">
    <text evidence="1">Belongs to the GroES chaperonin family.</text>
</comment>
<accession>A6VM39</accession>
<name>CH10_ACTSZ</name>
<organism>
    <name type="scientific">Actinobacillus succinogenes (strain ATCC 55618 / DSM 22257 / CCUG 43843 / 130Z)</name>
    <dbReference type="NCBI Taxonomy" id="339671"/>
    <lineage>
        <taxon>Bacteria</taxon>
        <taxon>Pseudomonadati</taxon>
        <taxon>Pseudomonadota</taxon>
        <taxon>Gammaproteobacteria</taxon>
        <taxon>Pasteurellales</taxon>
        <taxon>Pasteurellaceae</taxon>
        <taxon>Actinobacillus</taxon>
    </lineage>
</organism>
<proteinExistence type="inferred from homology"/>